<accession>Q2UPB0</accession>
<name>ALCJ_ASPOR</name>
<sequence>MAMDKKGDLEWMPPRPEPVHWRNRQRSLAYSVTLTLVALFFTFALRPEAFPSFLVRKGLHKSPLEQVLTRVPLTDGHNDFAIWTRAFYQNHIYRANFTDHDELYGQVDFPRLRKGRLGAQFWSVYVECARNPNEPGVQYEIVRDTFQQIDLVHRMINHFPDFLVPASSVADVHHNFYHSPGRISSLLGIEGLHQIGGSASVLRMYHELGVRYASLTHTCHNEYADSEAPEEPRHGGLSTAGEAIVAEMNRMGMIVDLSHTSLATQRAVFNVTRAPVMYSHSSAYALCPHSRNVPDDLLQMLKENDGIVMISLYPEYTNCQDADAASLADVADHIQYVGNLIGYRHVGLGSDFDGMSHGPKGLEDVSKYPDLIQELLDRGVSVDDLVGVTGGNVLRVLGDVEHVARSLADTLPLEDDVKPFFE</sequence>
<proteinExistence type="inferred from homology"/>
<gene>
    <name evidence="5" type="primary">aclJ</name>
    <name type="ORF">AO090001000042</name>
</gene>
<feature type="chain" id="PRO_0000441206" description="Dipeptidase aclJ">
    <location>
        <begin position="1"/>
        <end position="422"/>
    </location>
</feature>
<feature type="transmembrane region" description="Helical" evidence="1">
    <location>
        <begin position="28"/>
        <end position="45"/>
    </location>
</feature>
<feature type="binding site" evidence="3">
    <location>
        <position position="77"/>
    </location>
    <ligand>
        <name>Zn(2+)</name>
        <dbReference type="ChEBI" id="CHEBI:29105"/>
        <note>catalytic</note>
    </ligand>
</feature>
<feature type="binding site" evidence="3">
    <location>
        <position position="79"/>
    </location>
    <ligand>
        <name>Zn(2+)</name>
        <dbReference type="ChEBI" id="CHEBI:29105"/>
        <note>catalytic</note>
    </ligand>
</feature>
<feature type="binding site" evidence="3">
    <location>
        <position position="190"/>
    </location>
    <ligand>
        <name>Zn(2+)</name>
        <dbReference type="ChEBI" id="CHEBI:29105"/>
        <note>catalytic</note>
    </ligand>
</feature>
<feature type="binding site" evidence="3">
    <location>
        <position position="217"/>
    </location>
    <ligand>
        <name>substrate</name>
    </ligand>
</feature>
<feature type="binding site" evidence="3">
    <location>
        <position position="291"/>
    </location>
    <ligand>
        <name>substrate</name>
    </ligand>
</feature>
<feature type="binding site" evidence="3">
    <location>
        <position position="351"/>
    </location>
    <ligand>
        <name>substrate</name>
    </ligand>
</feature>
<feature type="glycosylation site" description="N-linked (GlcNAc...) asparagine" evidence="2">
    <location>
        <position position="96"/>
    </location>
</feature>
<feature type="glycosylation site" description="N-linked (GlcNAc...) asparagine" evidence="2">
    <location>
        <position position="270"/>
    </location>
</feature>
<feature type="disulfide bond" evidence="3">
    <location>
        <begin position="128"/>
        <end position="219"/>
    </location>
</feature>
<feature type="disulfide bond" evidence="3">
    <location>
        <begin position="287"/>
        <end position="319"/>
    </location>
</feature>
<protein>
    <recommendedName>
        <fullName evidence="6">Dipeptidase aclJ</fullName>
        <ecNumber evidence="3">3.4.13.19</ecNumber>
    </recommendedName>
    <alternativeName>
        <fullName evidence="5">Aspirochlorine biosynthesis protein J</fullName>
    </alternativeName>
</protein>
<dbReference type="EC" id="3.4.13.19" evidence="3"/>
<dbReference type="EMBL" id="BA000050">
    <property type="protein sequence ID" value="BAE56605.1"/>
    <property type="molecule type" value="Genomic_DNA"/>
</dbReference>
<dbReference type="RefSeq" id="XP_001818607.1">
    <property type="nucleotide sequence ID" value="XM_001818555.1"/>
</dbReference>
<dbReference type="SMR" id="Q2UPB0"/>
<dbReference type="STRING" id="510516.Q2UPB0"/>
<dbReference type="GlyCosmos" id="Q2UPB0">
    <property type="glycosylation" value="2 sites, No reported glycans"/>
</dbReference>
<dbReference type="EnsemblFungi" id="BAE56605">
    <property type="protein sequence ID" value="BAE56605"/>
    <property type="gene ID" value="AO090001000042"/>
</dbReference>
<dbReference type="GeneID" id="5990578"/>
<dbReference type="KEGG" id="aor:AO090001000042"/>
<dbReference type="HOGENOM" id="CLU_031404_4_0_1"/>
<dbReference type="OMA" id="SRHNVFG"/>
<dbReference type="OrthoDB" id="46231at5052"/>
<dbReference type="Proteomes" id="UP000006564">
    <property type="component" value="Chromosome 2"/>
</dbReference>
<dbReference type="GO" id="GO:0016020">
    <property type="term" value="C:membrane"/>
    <property type="evidence" value="ECO:0007669"/>
    <property type="project" value="UniProtKB-SubCell"/>
</dbReference>
<dbReference type="GO" id="GO:0046872">
    <property type="term" value="F:metal ion binding"/>
    <property type="evidence" value="ECO:0007669"/>
    <property type="project" value="UniProtKB-KW"/>
</dbReference>
<dbReference type="GO" id="GO:0070573">
    <property type="term" value="F:metallodipeptidase activity"/>
    <property type="evidence" value="ECO:0007669"/>
    <property type="project" value="InterPro"/>
</dbReference>
<dbReference type="GO" id="GO:0006508">
    <property type="term" value="P:proteolysis"/>
    <property type="evidence" value="ECO:0007669"/>
    <property type="project" value="UniProtKB-KW"/>
</dbReference>
<dbReference type="CDD" id="cd01301">
    <property type="entry name" value="rDP_like"/>
    <property type="match status" value="1"/>
</dbReference>
<dbReference type="Gene3D" id="3.20.20.140">
    <property type="entry name" value="Metal-dependent hydrolases"/>
    <property type="match status" value="1"/>
</dbReference>
<dbReference type="InterPro" id="IPR032466">
    <property type="entry name" value="Metal_Hydrolase"/>
</dbReference>
<dbReference type="InterPro" id="IPR008257">
    <property type="entry name" value="Pept_M19"/>
</dbReference>
<dbReference type="PANTHER" id="PTHR10443:SF12">
    <property type="entry name" value="DIPEPTIDASE"/>
    <property type="match status" value="1"/>
</dbReference>
<dbReference type="PANTHER" id="PTHR10443">
    <property type="entry name" value="MICROSOMAL DIPEPTIDASE"/>
    <property type="match status" value="1"/>
</dbReference>
<dbReference type="Pfam" id="PF01244">
    <property type="entry name" value="Peptidase_M19"/>
    <property type="match status" value="1"/>
</dbReference>
<dbReference type="SUPFAM" id="SSF51556">
    <property type="entry name" value="Metallo-dependent hydrolases"/>
    <property type="match status" value="1"/>
</dbReference>
<dbReference type="PROSITE" id="PS51365">
    <property type="entry name" value="RENAL_DIPEPTIDASE_2"/>
    <property type="match status" value="1"/>
</dbReference>
<organism>
    <name type="scientific">Aspergillus oryzae (strain ATCC 42149 / RIB 40)</name>
    <name type="common">Yellow koji mold</name>
    <dbReference type="NCBI Taxonomy" id="510516"/>
    <lineage>
        <taxon>Eukaryota</taxon>
        <taxon>Fungi</taxon>
        <taxon>Dikarya</taxon>
        <taxon>Ascomycota</taxon>
        <taxon>Pezizomycotina</taxon>
        <taxon>Eurotiomycetes</taxon>
        <taxon>Eurotiomycetidae</taxon>
        <taxon>Eurotiales</taxon>
        <taxon>Aspergillaceae</taxon>
        <taxon>Aspergillus</taxon>
        <taxon>Aspergillus subgen. Circumdati</taxon>
    </lineage>
</organism>
<keyword id="KW-0224">Dipeptidase</keyword>
<keyword id="KW-1015">Disulfide bond</keyword>
<keyword id="KW-0325">Glycoprotein</keyword>
<keyword id="KW-0378">Hydrolase</keyword>
<keyword id="KW-0472">Membrane</keyword>
<keyword id="KW-0479">Metal-binding</keyword>
<keyword id="KW-0482">Metalloprotease</keyword>
<keyword id="KW-0645">Protease</keyword>
<keyword id="KW-1185">Reference proteome</keyword>
<keyword id="KW-0812">Transmembrane</keyword>
<keyword id="KW-1133">Transmembrane helix</keyword>
<keyword id="KW-0862">Zinc</keyword>
<reference key="1">
    <citation type="journal article" date="2005" name="Nature">
        <title>Genome sequencing and analysis of Aspergillus oryzae.</title>
        <authorList>
            <person name="Machida M."/>
            <person name="Asai K."/>
            <person name="Sano M."/>
            <person name="Tanaka T."/>
            <person name="Kumagai T."/>
            <person name="Terai G."/>
            <person name="Kusumoto K."/>
            <person name="Arima T."/>
            <person name="Akita O."/>
            <person name="Kashiwagi Y."/>
            <person name="Abe K."/>
            <person name="Gomi K."/>
            <person name="Horiuchi H."/>
            <person name="Kitamoto K."/>
            <person name="Kobayashi T."/>
            <person name="Takeuchi M."/>
            <person name="Denning D.W."/>
            <person name="Galagan J.E."/>
            <person name="Nierman W.C."/>
            <person name="Yu J."/>
            <person name="Archer D.B."/>
            <person name="Bennett J.W."/>
            <person name="Bhatnagar D."/>
            <person name="Cleveland T.E."/>
            <person name="Fedorova N.D."/>
            <person name="Gotoh O."/>
            <person name="Horikawa H."/>
            <person name="Hosoyama A."/>
            <person name="Ichinomiya M."/>
            <person name="Igarashi R."/>
            <person name="Iwashita K."/>
            <person name="Juvvadi P.R."/>
            <person name="Kato M."/>
            <person name="Kato Y."/>
            <person name="Kin T."/>
            <person name="Kokubun A."/>
            <person name="Maeda H."/>
            <person name="Maeyama N."/>
            <person name="Maruyama J."/>
            <person name="Nagasaki H."/>
            <person name="Nakajima T."/>
            <person name="Oda K."/>
            <person name="Okada K."/>
            <person name="Paulsen I."/>
            <person name="Sakamoto K."/>
            <person name="Sawano T."/>
            <person name="Takahashi M."/>
            <person name="Takase K."/>
            <person name="Terabayashi Y."/>
            <person name="Wortman J.R."/>
            <person name="Yamada O."/>
            <person name="Yamagata Y."/>
            <person name="Anazawa H."/>
            <person name="Hata Y."/>
            <person name="Koide Y."/>
            <person name="Komori T."/>
            <person name="Koyama Y."/>
            <person name="Minetoki T."/>
            <person name="Suharnan S."/>
            <person name="Tanaka A."/>
            <person name="Isono K."/>
            <person name="Kuhara S."/>
            <person name="Ogasawara N."/>
            <person name="Kikuchi H."/>
        </authorList>
    </citation>
    <scope>NUCLEOTIDE SEQUENCE [LARGE SCALE GENOMIC DNA]</scope>
    <source>
        <strain>ATCC 42149 / RIB 40</strain>
    </source>
</reference>
<reference key="2">
    <citation type="journal article" date="2014" name="Angew. Chem. Int. Ed.">
        <title>Biosynthesis of the halogenated mycotoxin aspirochlorine in koji mold involves a cryptic amino acid conversion.</title>
        <authorList>
            <person name="Chankhamjon P."/>
            <person name="Boettger-Schmidt D."/>
            <person name="Scherlach K."/>
            <person name="Urbansky B."/>
            <person name="Lackner G."/>
            <person name="Kalb D."/>
            <person name="Dahse H.M."/>
            <person name="Hoffmeister D."/>
            <person name="Hertweck C."/>
        </authorList>
    </citation>
    <scope>FUNCTION</scope>
    <scope>PATHWAY</scope>
</reference>
<comment type="function">
    <text evidence="4">Dipeptidase; part of the gene cluster that mediates the biosynthesis of aspirochlorine (or antibiotic A30641), an unusual halogenated spiro compound with distinctive antifungal properties due to selective inhibition of protein biosynthesis, and which is also active against bacteria, viruses, and murine tumor cells (PubMed:25302411). The non-ribosomal peptide synthetase (NRPS) aclP is responsible the formation of the diketopiperazine (DKP) core from the condensation of 2 phenylalanine residues (PubMed:25302411). One Phe residue is tailored into chlorotyrosine by hydroxylation and chlorination, whereas the second Phe undergoes an unprecedented C-C bond cleavage to be converted into glycine (PubMed:25302411). After formation of the DKP, sulfur is incorporated into the DKP by conjugation with glutathione by aclG, followed by its stepwise degradation to the thiol by aclI, aclJ and aclK, and the dithiol oxidation by aclT (PubMed:25302411). In addition, oxygenases (aclB, aclC, aclL and aclO) and O-methyltransferases (aclM and aclU) act as tailoring enzymes to produce the intermediate dechloroaspirochlorine (PubMed:25302411). Ultimately, chlorination of dechloroaspirochlorine by the halogenase aclH is the last step in the aspirochlorine pathway (PubMed:25302411).</text>
</comment>
<comment type="catalytic activity">
    <reaction evidence="3">
        <text>an L-aminoacyl-L-amino acid + H2O = 2 an L-alpha-amino acid</text>
        <dbReference type="Rhea" id="RHEA:48940"/>
        <dbReference type="ChEBI" id="CHEBI:15377"/>
        <dbReference type="ChEBI" id="CHEBI:59869"/>
        <dbReference type="ChEBI" id="CHEBI:77460"/>
        <dbReference type="EC" id="3.4.13.19"/>
    </reaction>
</comment>
<comment type="cofactor">
    <cofactor evidence="3">
        <name>Zn(2+)</name>
        <dbReference type="ChEBI" id="CHEBI:29105"/>
    </cofactor>
</comment>
<comment type="pathway">
    <text evidence="7">Mycotoxin biosynthesis.</text>
</comment>
<comment type="subcellular location">
    <subcellularLocation>
        <location evidence="1">Membrane</location>
        <topology evidence="1">Single-pass membrane protein</topology>
    </subcellularLocation>
</comment>
<comment type="similarity">
    <text evidence="3">Belongs to the metallo-dependent hydrolases superfamily. Peptidase M19 family.</text>
</comment>
<evidence type="ECO:0000255" key="1"/>
<evidence type="ECO:0000255" key="2">
    <source>
        <dbReference type="PROSITE-ProRule" id="PRU00498"/>
    </source>
</evidence>
<evidence type="ECO:0000255" key="3">
    <source>
        <dbReference type="PROSITE-ProRule" id="PRU10073"/>
    </source>
</evidence>
<evidence type="ECO:0000269" key="4">
    <source>
    </source>
</evidence>
<evidence type="ECO:0000303" key="5">
    <source>
    </source>
</evidence>
<evidence type="ECO:0000305" key="6"/>
<evidence type="ECO:0000305" key="7">
    <source>
    </source>
</evidence>